<dbReference type="EC" id="2.7.4.8" evidence="1"/>
<dbReference type="EMBL" id="AE017180">
    <property type="protein sequence ID" value="AAR35614.1"/>
    <property type="molecule type" value="Genomic_DNA"/>
</dbReference>
<dbReference type="RefSeq" id="NP_953287.1">
    <property type="nucleotide sequence ID" value="NC_002939.5"/>
</dbReference>
<dbReference type="RefSeq" id="WP_010942878.1">
    <property type="nucleotide sequence ID" value="NC_002939.5"/>
</dbReference>
<dbReference type="SMR" id="P60551"/>
<dbReference type="FunCoup" id="P60551">
    <property type="interactions" value="481"/>
</dbReference>
<dbReference type="STRING" id="243231.GSU2238"/>
<dbReference type="EnsemblBacteria" id="AAR35614">
    <property type="protein sequence ID" value="AAR35614"/>
    <property type="gene ID" value="GSU2238"/>
</dbReference>
<dbReference type="KEGG" id="gsu:GSU2238"/>
<dbReference type="PATRIC" id="fig|243231.5.peg.2269"/>
<dbReference type="eggNOG" id="COG0194">
    <property type="taxonomic scope" value="Bacteria"/>
</dbReference>
<dbReference type="HOGENOM" id="CLU_001715_1_2_7"/>
<dbReference type="InParanoid" id="P60551"/>
<dbReference type="OrthoDB" id="9808150at2"/>
<dbReference type="Proteomes" id="UP000000577">
    <property type="component" value="Chromosome"/>
</dbReference>
<dbReference type="GO" id="GO:0005829">
    <property type="term" value="C:cytosol"/>
    <property type="evidence" value="ECO:0000318"/>
    <property type="project" value="GO_Central"/>
</dbReference>
<dbReference type="GO" id="GO:0005524">
    <property type="term" value="F:ATP binding"/>
    <property type="evidence" value="ECO:0007669"/>
    <property type="project" value="UniProtKB-UniRule"/>
</dbReference>
<dbReference type="GO" id="GO:0004385">
    <property type="term" value="F:guanylate kinase activity"/>
    <property type="evidence" value="ECO:0000318"/>
    <property type="project" value="GO_Central"/>
</dbReference>
<dbReference type="CDD" id="cd00071">
    <property type="entry name" value="GMPK"/>
    <property type="match status" value="1"/>
</dbReference>
<dbReference type="FunFam" id="3.30.63.10:FF:000002">
    <property type="entry name" value="Guanylate kinase 1"/>
    <property type="match status" value="1"/>
</dbReference>
<dbReference type="Gene3D" id="3.30.63.10">
    <property type="entry name" value="Guanylate Kinase phosphate binding domain"/>
    <property type="match status" value="1"/>
</dbReference>
<dbReference type="Gene3D" id="3.40.50.300">
    <property type="entry name" value="P-loop containing nucleotide triphosphate hydrolases"/>
    <property type="match status" value="1"/>
</dbReference>
<dbReference type="HAMAP" id="MF_00328">
    <property type="entry name" value="Guanylate_kinase"/>
    <property type="match status" value="1"/>
</dbReference>
<dbReference type="InterPro" id="IPR008145">
    <property type="entry name" value="GK/Ca_channel_bsu"/>
</dbReference>
<dbReference type="InterPro" id="IPR008144">
    <property type="entry name" value="Guanylate_kin-like_dom"/>
</dbReference>
<dbReference type="InterPro" id="IPR017665">
    <property type="entry name" value="Guanylate_kinase"/>
</dbReference>
<dbReference type="InterPro" id="IPR020590">
    <property type="entry name" value="Guanylate_kinase_CS"/>
</dbReference>
<dbReference type="InterPro" id="IPR027417">
    <property type="entry name" value="P-loop_NTPase"/>
</dbReference>
<dbReference type="NCBIfam" id="TIGR03263">
    <property type="entry name" value="guanyl_kin"/>
    <property type="match status" value="1"/>
</dbReference>
<dbReference type="PANTHER" id="PTHR23117:SF13">
    <property type="entry name" value="GUANYLATE KINASE"/>
    <property type="match status" value="1"/>
</dbReference>
<dbReference type="PANTHER" id="PTHR23117">
    <property type="entry name" value="GUANYLATE KINASE-RELATED"/>
    <property type="match status" value="1"/>
</dbReference>
<dbReference type="Pfam" id="PF00625">
    <property type="entry name" value="Guanylate_kin"/>
    <property type="match status" value="1"/>
</dbReference>
<dbReference type="SMART" id="SM00072">
    <property type="entry name" value="GuKc"/>
    <property type="match status" value="1"/>
</dbReference>
<dbReference type="SUPFAM" id="SSF52540">
    <property type="entry name" value="P-loop containing nucleoside triphosphate hydrolases"/>
    <property type="match status" value="1"/>
</dbReference>
<dbReference type="PROSITE" id="PS00856">
    <property type="entry name" value="GUANYLATE_KINASE_1"/>
    <property type="match status" value="1"/>
</dbReference>
<dbReference type="PROSITE" id="PS50052">
    <property type="entry name" value="GUANYLATE_KINASE_2"/>
    <property type="match status" value="1"/>
</dbReference>
<sequence>MKREGVLYILSAPSGAGKTTLCREIIDIFPQLRHSVSYTTRTPRPGEIHGKDYFFVSMDEFHRMIDADEFAEWAEVHGNCYGTSIRTLEENRAAGVDLILDIDIQGARQLQERFAGGVYIFILPPSFEELRRRLNGRSSDSDEVISRRINAAAGEIRESRWYDYIIVNDQFSRAVEELKSVIIAEQCRTARVLDAVSEIFSMD</sequence>
<gene>
    <name evidence="1" type="primary">gmk</name>
    <name type="ordered locus">GSU2238</name>
</gene>
<comment type="function">
    <text evidence="1">Essential for recycling GMP and indirectly, cGMP.</text>
</comment>
<comment type="catalytic activity">
    <reaction evidence="1">
        <text>GMP + ATP = GDP + ADP</text>
        <dbReference type="Rhea" id="RHEA:20780"/>
        <dbReference type="ChEBI" id="CHEBI:30616"/>
        <dbReference type="ChEBI" id="CHEBI:58115"/>
        <dbReference type="ChEBI" id="CHEBI:58189"/>
        <dbReference type="ChEBI" id="CHEBI:456216"/>
        <dbReference type="EC" id="2.7.4.8"/>
    </reaction>
</comment>
<comment type="subcellular location">
    <subcellularLocation>
        <location evidence="1">Cytoplasm</location>
    </subcellularLocation>
</comment>
<comment type="similarity">
    <text evidence="1">Belongs to the guanylate kinase family.</text>
</comment>
<accession>P60551</accession>
<feature type="chain" id="PRO_0000170542" description="Guanylate kinase">
    <location>
        <begin position="1"/>
        <end position="203"/>
    </location>
</feature>
<feature type="domain" description="Guanylate kinase-like" evidence="1">
    <location>
        <begin position="5"/>
        <end position="183"/>
    </location>
</feature>
<feature type="binding site" evidence="1">
    <location>
        <begin position="12"/>
        <end position="19"/>
    </location>
    <ligand>
        <name>ATP</name>
        <dbReference type="ChEBI" id="CHEBI:30616"/>
    </ligand>
</feature>
<keyword id="KW-0067">ATP-binding</keyword>
<keyword id="KW-0963">Cytoplasm</keyword>
<keyword id="KW-0418">Kinase</keyword>
<keyword id="KW-0547">Nucleotide-binding</keyword>
<keyword id="KW-1185">Reference proteome</keyword>
<keyword id="KW-0808">Transferase</keyword>
<protein>
    <recommendedName>
        <fullName evidence="1">Guanylate kinase</fullName>
        <ecNumber evidence="1">2.7.4.8</ecNumber>
    </recommendedName>
    <alternativeName>
        <fullName evidence="1">GMP kinase</fullName>
    </alternativeName>
</protein>
<evidence type="ECO:0000255" key="1">
    <source>
        <dbReference type="HAMAP-Rule" id="MF_00328"/>
    </source>
</evidence>
<proteinExistence type="inferred from homology"/>
<organism>
    <name type="scientific">Geobacter sulfurreducens (strain ATCC 51573 / DSM 12127 / PCA)</name>
    <dbReference type="NCBI Taxonomy" id="243231"/>
    <lineage>
        <taxon>Bacteria</taxon>
        <taxon>Pseudomonadati</taxon>
        <taxon>Thermodesulfobacteriota</taxon>
        <taxon>Desulfuromonadia</taxon>
        <taxon>Geobacterales</taxon>
        <taxon>Geobacteraceae</taxon>
        <taxon>Geobacter</taxon>
    </lineage>
</organism>
<reference key="1">
    <citation type="journal article" date="2003" name="Science">
        <title>Genome of Geobacter sulfurreducens: metal reduction in subsurface environments.</title>
        <authorList>
            <person name="Methe B.A."/>
            <person name="Nelson K.E."/>
            <person name="Eisen J.A."/>
            <person name="Paulsen I.T."/>
            <person name="Nelson W.C."/>
            <person name="Heidelberg J.F."/>
            <person name="Wu D."/>
            <person name="Wu M."/>
            <person name="Ward N.L."/>
            <person name="Beanan M.J."/>
            <person name="Dodson R.J."/>
            <person name="Madupu R."/>
            <person name="Brinkac L.M."/>
            <person name="Daugherty S.C."/>
            <person name="DeBoy R.T."/>
            <person name="Durkin A.S."/>
            <person name="Gwinn M.L."/>
            <person name="Kolonay J.F."/>
            <person name="Sullivan S.A."/>
            <person name="Haft D.H."/>
            <person name="Selengut J."/>
            <person name="Davidsen T.M."/>
            <person name="Zafar N."/>
            <person name="White O."/>
            <person name="Tran B."/>
            <person name="Romero C."/>
            <person name="Forberger H.A."/>
            <person name="Weidman J.F."/>
            <person name="Khouri H.M."/>
            <person name="Feldblyum T.V."/>
            <person name="Utterback T.R."/>
            <person name="Van Aken S.E."/>
            <person name="Lovley D.R."/>
            <person name="Fraser C.M."/>
        </authorList>
    </citation>
    <scope>NUCLEOTIDE SEQUENCE [LARGE SCALE GENOMIC DNA]</scope>
    <source>
        <strain>ATCC 51573 / DSM 12127 / PCA</strain>
    </source>
</reference>
<name>KGUA_GEOSL</name>